<proteinExistence type="inferred from homology"/>
<comment type="similarity">
    <text evidence="1">Belongs to the universal ribosomal protein uS2 family.</text>
</comment>
<sequence length="233" mass="26296">MSIISMKQLLEAGVHFGHQTRRWNPKMAPYIFTERNGIYIIDLQKTVKKVEEAYEFVKSVVADGKEVLFVGTKKQAQEAIEEESLRSGMHFVNNRWLGGMLTNFKTIKTRINKLEQLEKMEEDGTFEVLPKKEVIKLRNEKEKLEKNLGGIKNLDASNLGAIFIVDPRKEKNAIDEAKNLGIPVVAIVDTNCDPDEIDYVIPGNDDAIRAVRLITSKIADAIIEGNQGEQLAE</sequence>
<reference key="1">
    <citation type="journal article" date="2006" name="Nat. Biotechnol.">
        <title>The genome and transcriptomes of the anti-tumor agent Clostridium novyi-NT.</title>
        <authorList>
            <person name="Bettegowda C."/>
            <person name="Huang X."/>
            <person name="Lin J."/>
            <person name="Cheong I."/>
            <person name="Kohli M."/>
            <person name="Szabo S.A."/>
            <person name="Zhang X."/>
            <person name="Diaz L.A. Jr."/>
            <person name="Velculescu V.E."/>
            <person name="Parmigiani G."/>
            <person name="Kinzler K.W."/>
            <person name="Vogelstein B."/>
            <person name="Zhou S."/>
        </authorList>
    </citation>
    <scope>NUCLEOTIDE SEQUENCE [LARGE SCALE GENOMIC DNA]</scope>
    <source>
        <strain>NT</strain>
    </source>
</reference>
<protein>
    <recommendedName>
        <fullName evidence="1">Small ribosomal subunit protein uS2</fullName>
    </recommendedName>
    <alternativeName>
        <fullName evidence="2">30S ribosomal protein S2</fullName>
    </alternativeName>
</protein>
<organism>
    <name type="scientific">Clostridium novyi (strain NT)</name>
    <dbReference type="NCBI Taxonomy" id="386415"/>
    <lineage>
        <taxon>Bacteria</taxon>
        <taxon>Bacillati</taxon>
        <taxon>Bacillota</taxon>
        <taxon>Clostridia</taxon>
        <taxon>Eubacteriales</taxon>
        <taxon>Clostridiaceae</taxon>
        <taxon>Clostridium</taxon>
    </lineage>
</organism>
<feature type="chain" id="PRO_1000003937" description="Small ribosomal subunit protein uS2">
    <location>
        <begin position="1"/>
        <end position="233"/>
    </location>
</feature>
<accession>A0Q0S0</accession>
<evidence type="ECO:0000255" key="1">
    <source>
        <dbReference type="HAMAP-Rule" id="MF_00291"/>
    </source>
</evidence>
<evidence type="ECO:0000305" key="2"/>
<name>RS2_CLONN</name>
<keyword id="KW-1185">Reference proteome</keyword>
<keyword id="KW-0687">Ribonucleoprotein</keyword>
<keyword id="KW-0689">Ribosomal protein</keyword>
<dbReference type="EMBL" id="CP000382">
    <property type="protein sequence ID" value="ABK60452.1"/>
    <property type="molecule type" value="Genomic_DNA"/>
</dbReference>
<dbReference type="RefSeq" id="WP_011722222.1">
    <property type="nucleotide sequence ID" value="NC_008593.1"/>
</dbReference>
<dbReference type="SMR" id="A0Q0S0"/>
<dbReference type="STRING" id="386415.NT01CX_2149"/>
<dbReference type="KEGG" id="cno:NT01CX_2149"/>
<dbReference type="eggNOG" id="COG0052">
    <property type="taxonomic scope" value="Bacteria"/>
</dbReference>
<dbReference type="HOGENOM" id="CLU_040318_1_2_9"/>
<dbReference type="Proteomes" id="UP000008220">
    <property type="component" value="Chromosome"/>
</dbReference>
<dbReference type="GO" id="GO:0022627">
    <property type="term" value="C:cytosolic small ribosomal subunit"/>
    <property type="evidence" value="ECO:0007669"/>
    <property type="project" value="TreeGrafter"/>
</dbReference>
<dbReference type="GO" id="GO:0003735">
    <property type="term" value="F:structural constituent of ribosome"/>
    <property type="evidence" value="ECO:0007669"/>
    <property type="project" value="InterPro"/>
</dbReference>
<dbReference type="GO" id="GO:0006412">
    <property type="term" value="P:translation"/>
    <property type="evidence" value="ECO:0007669"/>
    <property type="project" value="UniProtKB-UniRule"/>
</dbReference>
<dbReference type="CDD" id="cd01425">
    <property type="entry name" value="RPS2"/>
    <property type="match status" value="1"/>
</dbReference>
<dbReference type="FunFam" id="1.10.287.610:FF:000001">
    <property type="entry name" value="30S ribosomal protein S2"/>
    <property type="match status" value="1"/>
</dbReference>
<dbReference type="Gene3D" id="3.40.50.10490">
    <property type="entry name" value="Glucose-6-phosphate isomerase like protein, domain 1"/>
    <property type="match status" value="1"/>
</dbReference>
<dbReference type="Gene3D" id="1.10.287.610">
    <property type="entry name" value="Helix hairpin bin"/>
    <property type="match status" value="1"/>
</dbReference>
<dbReference type="HAMAP" id="MF_00291_B">
    <property type="entry name" value="Ribosomal_uS2_B"/>
    <property type="match status" value="1"/>
</dbReference>
<dbReference type="InterPro" id="IPR001865">
    <property type="entry name" value="Ribosomal_uS2"/>
</dbReference>
<dbReference type="InterPro" id="IPR005706">
    <property type="entry name" value="Ribosomal_uS2_bac/mit/plastid"/>
</dbReference>
<dbReference type="InterPro" id="IPR018130">
    <property type="entry name" value="Ribosomal_uS2_CS"/>
</dbReference>
<dbReference type="InterPro" id="IPR023591">
    <property type="entry name" value="Ribosomal_uS2_flav_dom_sf"/>
</dbReference>
<dbReference type="NCBIfam" id="TIGR01011">
    <property type="entry name" value="rpsB_bact"/>
    <property type="match status" value="1"/>
</dbReference>
<dbReference type="PANTHER" id="PTHR12534">
    <property type="entry name" value="30S RIBOSOMAL PROTEIN S2 PROKARYOTIC AND ORGANELLAR"/>
    <property type="match status" value="1"/>
</dbReference>
<dbReference type="PANTHER" id="PTHR12534:SF0">
    <property type="entry name" value="SMALL RIBOSOMAL SUBUNIT PROTEIN US2M"/>
    <property type="match status" value="1"/>
</dbReference>
<dbReference type="Pfam" id="PF00318">
    <property type="entry name" value="Ribosomal_S2"/>
    <property type="match status" value="1"/>
</dbReference>
<dbReference type="PRINTS" id="PR00395">
    <property type="entry name" value="RIBOSOMALS2"/>
</dbReference>
<dbReference type="SUPFAM" id="SSF52313">
    <property type="entry name" value="Ribosomal protein S2"/>
    <property type="match status" value="1"/>
</dbReference>
<dbReference type="PROSITE" id="PS00962">
    <property type="entry name" value="RIBOSOMAL_S2_1"/>
    <property type="match status" value="1"/>
</dbReference>
<gene>
    <name evidence="1" type="primary">rpsB</name>
    <name type="ordered locus">NT01CX_2149</name>
</gene>